<dbReference type="EMBL" id="CP000360">
    <property type="protein sequence ID" value="ABF43219.1"/>
    <property type="molecule type" value="Genomic_DNA"/>
</dbReference>
<dbReference type="RefSeq" id="WP_011525018.1">
    <property type="nucleotide sequence ID" value="NC_008009.1"/>
</dbReference>
<dbReference type="SMR" id="Q1IIT1"/>
<dbReference type="STRING" id="204669.Acid345_4219"/>
<dbReference type="EnsemblBacteria" id="ABF43219">
    <property type="protein sequence ID" value="ABF43219"/>
    <property type="gene ID" value="Acid345_4219"/>
</dbReference>
<dbReference type="KEGG" id="aba:Acid345_4219"/>
<dbReference type="eggNOG" id="COG0779">
    <property type="taxonomic scope" value="Bacteria"/>
</dbReference>
<dbReference type="HOGENOM" id="CLU_070525_1_1_0"/>
<dbReference type="OrthoDB" id="9805006at2"/>
<dbReference type="Proteomes" id="UP000002432">
    <property type="component" value="Chromosome"/>
</dbReference>
<dbReference type="GO" id="GO:0005829">
    <property type="term" value="C:cytosol"/>
    <property type="evidence" value="ECO:0007669"/>
    <property type="project" value="TreeGrafter"/>
</dbReference>
<dbReference type="GO" id="GO:0000028">
    <property type="term" value="P:ribosomal small subunit assembly"/>
    <property type="evidence" value="ECO:0007669"/>
    <property type="project" value="TreeGrafter"/>
</dbReference>
<dbReference type="GO" id="GO:0006412">
    <property type="term" value="P:translation"/>
    <property type="evidence" value="ECO:0007669"/>
    <property type="project" value="TreeGrafter"/>
</dbReference>
<dbReference type="CDD" id="cd01734">
    <property type="entry name" value="YlxS_C"/>
    <property type="match status" value="1"/>
</dbReference>
<dbReference type="FunFam" id="3.30.300.70:FF:000001">
    <property type="entry name" value="Ribosome maturation factor RimP"/>
    <property type="match status" value="1"/>
</dbReference>
<dbReference type="Gene3D" id="2.30.30.180">
    <property type="entry name" value="Ribosome maturation factor RimP, C-terminal domain"/>
    <property type="match status" value="1"/>
</dbReference>
<dbReference type="Gene3D" id="3.30.300.70">
    <property type="entry name" value="RimP-like superfamily, N-terminal"/>
    <property type="match status" value="1"/>
</dbReference>
<dbReference type="HAMAP" id="MF_01077">
    <property type="entry name" value="RimP"/>
    <property type="match status" value="1"/>
</dbReference>
<dbReference type="InterPro" id="IPR003728">
    <property type="entry name" value="Ribosome_maturation_RimP"/>
</dbReference>
<dbReference type="InterPro" id="IPR028998">
    <property type="entry name" value="RimP_C"/>
</dbReference>
<dbReference type="InterPro" id="IPR036847">
    <property type="entry name" value="RimP_C_sf"/>
</dbReference>
<dbReference type="InterPro" id="IPR028989">
    <property type="entry name" value="RimP_N"/>
</dbReference>
<dbReference type="InterPro" id="IPR035956">
    <property type="entry name" value="RimP_N_sf"/>
</dbReference>
<dbReference type="PANTHER" id="PTHR33867">
    <property type="entry name" value="RIBOSOME MATURATION FACTOR RIMP"/>
    <property type="match status" value="1"/>
</dbReference>
<dbReference type="PANTHER" id="PTHR33867:SF1">
    <property type="entry name" value="RIBOSOME MATURATION FACTOR RIMP"/>
    <property type="match status" value="1"/>
</dbReference>
<dbReference type="Pfam" id="PF17384">
    <property type="entry name" value="DUF150_C"/>
    <property type="match status" value="1"/>
</dbReference>
<dbReference type="Pfam" id="PF02576">
    <property type="entry name" value="RimP_N"/>
    <property type="match status" value="1"/>
</dbReference>
<dbReference type="SUPFAM" id="SSF74942">
    <property type="entry name" value="YhbC-like, C-terminal domain"/>
    <property type="match status" value="1"/>
</dbReference>
<dbReference type="SUPFAM" id="SSF75420">
    <property type="entry name" value="YhbC-like, N-terminal domain"/>
    <property type="match status" value="1"/>
</dbReference>
<reference key="1">
    <citation type="journal article" date="2009" name="Appl. Environ. Microbiol.">
        <title>Three genomes from the phylum Acidobacteria provide insight into the lifestyles of these microorganisms in soils.</title>
        <authorList>
            <person name="Ward N.L."/>
            <person name="Challacombe J.F."/>
            <person name="Janssen P.H."/>
            <person name="Henrissat B."/>
            <person name="Coutinho P.M."/>
            <person name="Wu M."/>
            <person name="Xie G."/>
            <person name="Haft D.H."/>
            <person name="Sait M."/>
            <person name="Badger J."/>
            <person name="Barabote R.D."/>
            <person name="Bradley B."/>
            <person name="Brettin T.S."/>
            <person name="Brinkac L.M."/>
            <person name="Bruce D."/>
            <person name="Creasy T."/>
            <person name="Daugherty S.C."/>
            <person name="Davidsen T.M."/>
            <person name="DeBoy R.T."/>
            <person name="Detter J.C."/>
            <person name="Dodson R.J."/>
            <person name="Durkin A.S."/>
            <person name="Ganapathy A."/>
            <person name="Gwinn-Giglio M."/>
            <person name="Han C.S."/>
            <person name="Khouri H."/>
            <person name="Kiss H."/>
            <person name="Kothari S.P."/>
            <person name="Madupu R."/>
            <person name="Nelson K.E."/>
            <person name="Nelson W.C."/>
            <person name="Paulsen I."/>
            <person name="Penn K."/>
            <person name="Ren Q."/>
            <person name="Rosovitz M.J."/>
            <person name="Selengut J.D."/>
            <person name="Shrivastava S."/>
            <person name="Sullivan S.A."/>
            <person name="Tapia R."/>
            <person name="Thompson L.S."/>
            <person name="Watkins K.L."/>
            <person name="Yang Q."/>
            <person name="Yu C."/>
            <person name="Zafar N."/>
            <person name="Zhou L."/>
            <person name="Kuske C.R."/>
        </authorList>
    </citation>
    <scope>NUCLEOTIDE SEQUENCE [LARGE SCALE GENOMIC DNA]</scope>
    <source>
        <strain>Ellin345</strain>
    </source>
</reference>
<feature type="chain" id="PRO_0000384587" description="Ribosome maturation factor RimP">
    <location>
        <begin position="1"/>
        <end position="169"/>
    </location>
</feature>
<evidence type="ECO:0000255" key="1">
    <source>
        <dbReference type="HAMAP-Rule" id="MF_01077"/>
    </source>
</evidence>
<organism>
    <name type="scientific">Koribacter versatilis (strain Ellin345)</name>
    <dbReference type="NCBI Taxonomy" id="204669"/>
    <lineage>
        <taxon>Bacteria</taxon>
        <taxon>Pseudomonadati</taxon>
        <taxon>Acidobacteriota</taxon>
        <taxon>Terriglobia</taxon>
        <taxon>Terriglobales</taxon>
        <taxon>Candidatus Korobacteraceae</taxon>
        <taxon>Candidatus Korobacter</taxon>
    </lineage>
</organism>
<sequence length="169" mass="18705">MIEIEKVREIVERVARDYGLEVVEVEFRGGGKARMLRITIDKPEGVTHDDCSHVSNEVSTILDVEDVVPGASYTLEVSSPGLDRKISKPADFERFTGSLVKVSTREPLDGNRHFEGRLESFADGKLTIDLNAVPQRGQKKQKGPKAPVVERKVEIALADVEKANLVPEI</sequence>
<name>RIMP_KORVE</name>
<comment type="function">
    <text evidence="1">Required for maturation of 30S ribosomal subunits.</text>
</comment>
<comment type="subcellular location">
    <subcellularLocation>
        <location evidence="1">Cytoplasm</location>
    </subcellularLocation>
</comment>
<comment type="similarity">
    <text evidence="1">Belongs to the RimP family.</text>
</comment>
<protein>
    <recommendedName>
        <fullName evidence="1">Ribosome maturation factor RimP</fullName>
    </recommendedName>
</protein>
<accession>Q1IIT1</accession>
<proteinExistence type="inferred from homology"/>
<keyword id="KW-0963">Cytoplasm</keyword>
<keyword id="KW-1185">Reference proteome</keyword>
<keyword id="KW-0690">Ribosome biogenesis</keyword>
<gene>
    <name evidence="1" type="primary">rimP</name>
    <name type="ordered locus">Acid345_4219</name>
</gene>